<dbReference type="EC" id="4.1.1.39" evidence="1"/>
<dbReference type="EMBL" id="CP000553">
    <property type="protein sequence ID" value="ABM75166.1"/>
    <property type="molecule type" value="Genomic_DNA"/>
</dbReference>
<dbReference type="RefSeq" id="WP_011294510.1">
    <property type="nucleotide sequence ID" value="NC_008819.1"/>
</dbReference>
<dbReference type="SMR" id="A2C106"/>
<dbReference type="KEGG" id="pme:NATL1_06041"/>
<dbReference type="eggNOG" id="COG1850">
    <property type="taxonomic scope" value="Bacteria"/>
</dbReference>
<dbReference type="HOGENOM" id="CLU_031450_2_0_3"/>
<dbReference type="Proteomes" id="UP000002592">
    <property type="component" value="Chromosome"/>
</dbReference>
<dbReference type="GO" id="GO:0031470">
    <property type="term" value="C:carboxysome"/>
    <property type="evidence" value="ECO:0007669"/>
    <property type="project" value="UniProtKB-SubCell"/>
</dbReference>
<dbReference type="GO" id="GO:0000287">
    <property type="term" value="F:magnesium ion binding"/>
    <property type="evidence" value="ECO:0007669"/>
    <property type="project" value="UniProtKB-UniRule"/>
</dbReference>
<dbReference type="GO" id="GO:0004497">
    <property type="term" value="F:monooxygenase activity"/>
    <property type="evidence" value="ECO:0007669"/>
    <property type="project" value="UniProtKB-KW"/>
</dbReference>
<dbReference type="GO" id="GO:0016984">
    <property type="term" value="F:ribulose-bisphosphate carboxylase activity"/>
    <property type="evidence" value="ECO:0007669"/>
    <property type="project" value="UniProtKB-UniRule"/>
</dbReference>
<dbReference type="GO" id="GO:0009853">
    <property type="term" value="P:photorespiration"/>
    <property type="evidence" value="ECO:0007669"/>
    <property type="project" value="UniProtKB-KW"/>
</dbReference>
<dbReference type="GO" id="GO:0019253">
    <property type="term" value="P:reductive pentose-phosphate cycle"/>
    <property type="evidence" value="ECO:0007669"/>
    <property type="project" value="UniProtKB-UniRule"/>
</dbReference>
<dbReference type="Gene3D" id="3.20.20.110">
    <property type="entry name" value="Ribulose bisphosphate carboxylase, large subunit, C-terminal domain"/>
    <property type="match status" value="1"/>
</dbReference>
<dbReference type="Gene3D" id="3.30.70.150">
    <property type="entry name" value="RuBisCO large subunit, N-terminal domain"/>
    <property type="match status" value="1"/>
</dbReference>
<dbReference type="HAMAP" id="MF_01338">
    <property type="entry name" value="RuBisCO_L_type1"/>
    <property type="match status" value="1"/>
</dbReference>
<dbReference type="InterPro" id="IPR033966">
    <property type="entry name" value="RuBisCO"/>
</dbReference>
<dbReference type="InterPro" id="IPR000685">
    <property type="entry name" value="RuBisCO_lsu_C"/>
</dbReference>
<dbReference type="InterPro" id="IPR036376">
    <property type="entry name" value="RuBisCO_lsu_C_sf"/>
</dbReference>
<dbReference type="InterPro" id="IPR017443">
    <property type="entry name" value="RuBisCO_lsu_fd_N"/>
</dbReference>
<dbReference type="InterPro" id="IPR036422">
    <property type="entry name" value="RuBisCO_lsu_N_sf"/>
</dbReference>
<dbReference type="InterPro" id="IPR020888">
    <property type="entry name" value="RuBisCO_lsuI"/>
</dbReference>
<dbReference type="NCBIfam" id="NF003252">
    <property type="entry name" value="PRK04208.1"/>
    <property type="match status" value="1"/>
</dbReference>
<dbReference type="PANTHER" id="PTHR42704">
    <property type="entry name" value="RIBULOSE BISPHOSPHATE CARBOXYLASE"/>
    <property type="match status" value="1"/>
</dbReference>
<dbReference type="PANTHER" id="PTHR42704:SF17">
    <property type="entry name" value="RIBULOSE BISPHOSPHATE CARBOXYLASE LARGE CHAIN"/>
    <property type="match status" value="1"/>
</dbReference>
<dbReference type="Pfam" id="PF00016">
    <property type="entry name" value="RuBisCO_large"/>
    <property type="match status" value="1"/>
</dbReference>
<dbReference type="Pfam" id="PF02788">
    <property type="entry name" value="RuBisCO_large_N"/>
    <property type="match status" value="1"/>
</dbReference>
<dbReference type="SFLD" id="SFLDG01052">
    <property type="entry name" value="RuBisCO"/>
    <property type="match status" value="1"/>
</dbReference>
<dbReference type="SFLD" id="SFLDS00014">
    <property type="entry name" value="RuBisCO"/>
    <property type="match status" value="1"/>
</dbReference>
<dbReference type="SFLD" id="SFLDG00301">
    <property type="entry name" value="RuBisCO-like_proteins"/>
    <property type="match status" value="1"/>
</dbReference>
<dbReference type="SUPFAM" id="SSF51649">
    <property type="entry name" value="RuBisCo, C-terminal domain"/>
    <property type="match status" value="1"/>
</dbReference>
<dbReference type="SUPFAM" id="SSF54966">
    <property type="entry name" value="RuBisCO, large subunit, small (N-terminal) domain"/>
    <property type="match status" value="1"/>
</dbReference>
<protein>
    <recommendedName>
        <fullName evidence="1">Ribulose bisphosphate carboxylase large chain</fullName>
        <shortName evidence="1">RuBisCO large subunit</shortName>
        <ecNumber evidence="1">4.1.1.39</ecNumber>
    </recommendedName>
</protein>
<sequence length="470" mass="52427">MAKKYDAGVKEYRDTYFTPDYVPLDTDLLACFKCTGQEGVPKEEVAAAVAAESSTGTWSTVWSELLVDLEFYKGRCYRIEDVPGDKDAFYAFIAYPLDLFEEGSITNVLTSLVGNVFGFKALRHLRLEDIRFPMAFIKTCGGPPSGIVVERDRLNKYGRPLLGCTIKPKLGLSGKNYGRVVYECLRGGLDLTKDDENINSQPFQRWRERFEFVAEAVKLAQQETGEVKGHYLNCTATTPEEMYKRAEFAKELDMPIIMHDYITGGFTANTGLANWCRENGMLLHIHRAMHAVIDRHPQHGIHFRVLAKCLRLSGGDQLHTGTVVGKLEGDRQTTLGYIDNLRESFVPEDRTRGNFFDQDWGSMPGVFAVASGGIHVWHMPALLAIFGDDSCLQFGGGTHGHPWGSAAGAAANRVALEACVKARNAGREIEKESRDILLEAAKHSPELAIALETWKEIKFEFDTVDKLDVQ</sequence>
<gene>
    <name evidence="1" type="primary">cbbL</name>
    <name evidence="1" type="synonym">rbcL</name>
    <name type="ordered locus">NATL1_06041</name>
</gene>
<organism>
    <name type="scientific">Prochlorococcus marinus (strain NATL1A)</name>
    <dbReference type="NCBI Taxonomy" id="167555"/>
    <lineage>
        <taxon>Bacteria</taxon>
        <taxon>Bacillati</taxon>
        <taxon>Cyanobacteriota</taxon>
        <taxon>Cyanophyceae</taxon>
        <taxon>Synechococcales</taxon>
        <taxon>Prochlorococcaceae</taxon>
        <taxon>Prochlorococcus</taxon>
    </lineage>
</organism>
<reference key="1">
    <citation type="journal article" date="2007" name="PLoS Genet.">
        <title>Patterns and implications of gene gain and loss in the evolution of Prochlorococcus.</title>
        <authorList>
            <person name="Kettler G.C."/>
            <person name="Martiny A.C."/>
            <person name="Huang K."/>
            <person name="Zucker J."/>
            <person name="Coleman M.L."/>
            <person name="Rodrigue S."/>
            <person name="Chen F."/>
            <person name="Lapidus A."/>
            <person name="Ferriera S."/>
            <person name="Johnson J."/>
            <person name="Steglich C."/>
            <person name="Church G.M."/>
            <person name="Richardson P."/>
            <person name="Chisholm S.W."/>
        </authorList>
    </citation>
    <scope>NUCLEOTIDE SEQUENCE [LARGE SCALE GENOMIC DNA]</scope>
    <source>
        <strain>NATL1A</strain>
    </source>
</reference>
<accession>A2C106</accession>
<evidence type="ECO:0000255" key="1">
    <source>
        <dbReference type="HAMAP-Rule" id="MF_01338"/>
    </source>
</evidence>
<name>RBL_PROM1</name>
<comment type="function">
    <text evidence="1">RuBisCO catalyzes two reactions: the carboxylation of D-ribulose 1,5-bisphosphate, the primary event in carbon dioxide fixation, as well as the oxidative fragmentation of the pentose substrate in the photorespiration process. Both reactions occur simultaneously and in competition at the same active site.</text>
</comment>
<comment type="catalytic activity">
    <reaction evidence="1">
        <text>2 (2R)-3-phosphoglycerate + 2 H(+) = D-ribulose 1,5-bisphosphate + CO2 + H2O</text>
        <dbReference type="Rhea" id="RHEA:23124"/>
        <dbReference type="ChEBI" id="CHEBI:15377"/>
        <dbReference type="ChEBI" id="CHEBI:15378"/>
        <dbReference type="ChEBI" id="CHEBI:16526"/>
        <dbReference type="ChEBI" id="CHEBI:57870"/>
        <dbReference type="ChEBI" id="CHEBI:58272"/>
        <dbReference type="EC" id="4.1.1.39"/>
    </reaction>
</comment>
<comment type="catalytic activity">
    <reaction evidence="1">
        <text>D-ribulose 1,5-bisphosphate + O2 = 2-phosphoglycolate + (2R)-3-phosphoglycerate + 2 H(+)</text>
        <dbReference type="Rhea" id="RHEA:36631"/>
        <dbReference type="ChEBI" id="CHEBI:15378"/>
        <dbReference type="ChEBI" id="CHEBI:15379"/>
        <dbReference type="ChEBI" id="CHEBI:57870"/>
        <dbReference type="ChEBI" id="CHEBI:58033"/>
        <dbReference type="ChEBI" id="CHEBI:58272"/>
    </reaction>
</comment>
<comment type="cofactor">
    <cofactor evidence="1">
        <name>Mg(2+)</name>
        <dbReference type="ChEBI" id="CHEBI:18420"/>
    </cofactor>
    <text evidence="1">Binds 1 Mg(2+) ion per subunit.</text>
</comment>
<comment type="subunit">
    <text evidence="1">Heterohexadecamer of 8 large chains and 8 small chains.</text>
</comment>
<comment type="subcellular location">
    <subcellularLocation>
        <location evidence="1">Carboxysome</location>
    </subcellularLocation>
</comment>
<comment type="miscellaneous">
    <text evidence="1">The basic functional RuBisCO is composed of a large chain homodimer in a 'head-to-tail' conformation. In form I RuBisCO this homodimer is arranged in a barrel-like tetramer with the small subunits forming a tetrameric 'cap' on each end of the 'barrel'.</text>
</comment>
<comment type="similarity">
    <text evidence="1">Belongs to the RuBisCO large chain family. Type I subfamily.</text>
</comment>
<feature type="chain" id="PRO_0000299972" description="Ribulose bisphosphate carboxylase large chain">
    <location>
        <begin position="1"/>
        <end position="470"/>
    </location>
</feature>
<feature type="active site" description="Proton acceptor" evidence="1">
    <location>
        <position position="167"/>
    </location>
</feature>
<feature type="active site" description="Proton acceptor" evidence="1">
    <location>
        <position position="286"/>
    </location>
</feature>
<feature type="binding site" description="in homodimeric partner" evidence="1">
    <location>
        <position position="115"/>
    </location>
    <ligand>
        <name>substrate</name>
    </ligand>
</feature>
<feature type="binding site" evidence="1">
    <location>
        <position position="165"/>
    </location>
    <ligand>
        <name>substrate</name>
    </ligand>
</feature>
<feature type="binding site" evidence="1">
    <location>
        <position position="169"/>
    </location>
    <ligand>
        <name>substrate</name>
    </ligand>
</feature>
<feature type="binding site" description="via carbamate group" evidence="1">
    <location>
        <position position="193"/>
    </location>
    <ligand>
        <name>Mg(2+)</name>
        <dbReference type="ChEBI" id="CHEBI:18420"/>
    </ligand>
</feature>
<feature type="binding site" evidence="1">
    <location>
        <position position="195"/>
    </location>
    <ligand>
        <name>Mg(2+)</name>
        <dbReference type="ChEBI" id="CHEBI:18420"/>
    </ligand>
</feature>
<feature type="binding site" evidence="1">
    <location>
        <position position="196"/>
    </location>
    <ligand>
        <name>Mg(2+)</name>
        <dbReference type="ChEBI" id="CHEBI:18420"/>
    </ligand>
</feature>
<feature type="binding site" evidence="1">
    <location>
        <position position="287"/>
    </location>
    <ligand>
        <name>substrate</name>
    </ligand>
</feature>
<feature type="binding site" evidence="1">
    <location>
        <position position="319"/>
    </location>
    <ligand>
        <name>substrate</name>
    </ligand>
</feature>
<feature type="binding site" evidence="1">
    <location>
        <position position="371"/>
    </location>
    <ligand>
        <name>substrate</name>
    </ligand>
</feature>
<feature type="site" description="Transition state stabilizer" evidence="1">
    <location>
        <position position="326"/>
    </location>
</feature>
<feature type="modified residue" description="N6-carboxylysine" evidence="1">
    <location>
        <position position="193"/>
    </location>
</feature>
<proteinExistence type="inferred from homology"/>
<keyword id="KW-1283">Bacterial microcompartment</keyword>
<keyword id="KW-0113">Calvin cycle</keyword>
<keyword id="KW-0120">Carbon dioxide fixation</keyword>
<keyword id="KW-1282">Carboxysome</keyword>
<keyword id="KW-0456">Lyase</keyword>
<keyword id="KW-0460">Magnesium</keyword>
<keyword id="KW-0479">Metal-binding</keyword>
<keyword id="KW-0503">Monooxygenase</keyword>
<keyword id="KW-0560">Oxidoreductase</keyword>
<keyword id="KW-0601">Photorespiration</keyword>
<keyword id="KW-0602">Photosynthesis</keyword>